<sequence length="217" mass="23756">MIRNELIDQLARTQASALETQGLGLVPMVVEQSGRGERAYDIYSRLLKERVIFMVGEVNDQTANLVVAQLLFLESENPDKDISLYINSPGGSVSAGLAMYDTMQFVKPDVSTLCMGMAASMGAFLLAAGAKGKRYALPNSRIMIHQPLGGARGQASDIEIQAREILYLRERLNTILSEVTGQPVDKIARDTDRDNFMSGDQAKEYGLIDKVLARRGA</sequence>
<evidence type="ECO:0000255" key="1">
    <source>
        <dbReference type="HAMAP-Rule" id="MF_00444"/>
    </source>
</evidence>
<proteinExistence type="inferred from homology"/>
<accession>Q8XYP7</accession>
<comment type="function">
    <text evidence="1">Cleaves peptides in various proteins in a process that requires ATP hydrolysis. Has a chymotrypsin-like activity. Plays a major role in the degradation of misfolded proteins.</text>
</comment>
<comment type="catalytic activity">
    <reaction evidence="1">
        <text>Hydrolysis of proteins to small peptides in the presence of ATP and magnesium. alpha-casein is the usual test substrate. In the absence of ATP, only oligopeptides shorter than five residues are hydrolyzed (such as succinyl-Leu-Tyr-|-NHMec, and Leu-Tyr-Leu-|-Tyr-Trp, in which cleavage of the -Tyr-|-Leu- and -Tyr-|-Trp bonds also occurs).</text>
        <dbReference type="EC" id="3.4.21.92"/>
    </reaction>
</comment>
<comment type="subunit">
    <text evidence="1">Fourteen ClpP subunits assemble into 2 heptameric rings which stack back to back to give a disk-like structure with a central cavity, resembling the structure of eukaryotic proteasomes.</text>
</comment>
<comment type="subcellular location">
    <subcellularLocation>
        <location evidence="1">Cytoplasm</location>
    </subcellularLocation>
</comment>
<comment type="similarity">
    <text evidence="1">Belongs to the peptidase S14 family.</text>
</comment>
<reference key="1">
    <citation type="journal article" date="2002" name="Nature">
        <title>Genome sequence of the plant pathogen Ralstonia solanacearum.</title>
        <authorList>
            <person name="Salanoubat M."/>
            <person name="Genin S."/>
            <person name="Artiguenave F."/>
            <person name="Gouzy J."/>
            <person name="Mangenot S."/>
            <person name="Arlat M."/>
            <person name="Billault A."/>
            <person name="Brottier P."/>
            <person name="Camus J.-C."/>
            <person name="Cattolico L."/>
            <person name="Chandler M."/>
            <person name="Choisne N."/>
            <person name="Claudel-Renard C."/>
            <person name="Cunnac S."/>
            <person name="Demange N."/>
            <person name="Gaspin C."/>
            <person name="Lavie M."/>
            <person name="Moisan A."/>
            <person name="Robert C."/>
            <person name="Saurin W."/>
            <person name="Schiex T."/>
            <person name="Siguier P."/>
            <person name="Thebault P."/>
            <person name="Whalen M."/>
            <person name="Wincker P."/>
            <person name="Levy M."/>
            <person name="Weissenbach J."/>
            <person name="Boucher C.A."/>
        </authorList>
    </citation>
    <scope>NUCLEOTIDE SEQUENCE [LARGE SCALE GENOMIC DNA]</scope>
    <source>
        <strain>ATCC BAA-1114 / GMI1000</strain>
    </source>
</reference>
<dbReference type="EC" id="3.4.21.92" evidence="1"/>
<dbReference type="EMBL" id="AL646052">
    <property type="protein sequence ID" value="CAD15413.1"/>
    <property type="molecule type" value="Genomic_DNA"/>
</dbReference>
<dbReference type="RefSeq" id="WP_003267806.1">
    <property type="nucleotide sequence ID" value="NC_003295.1"/>
</dbReference>
<dbReference type="SMR" id="Q8XYP7"/>
<dbReference type="STRING" id="267608.RSc1711"/>
<dbReference type="MEROPS" id="S14.001"/>
<dbReference type="EnsemblBacteria" id="CAD15413">
    <property type="protein sequence ID" value="CAD15413"/>
    <property type="gene ID" value="RSc1711"/>
</dbReference>
<dbReference type="GeneID" id="97321082"/>
<dbReference type="KEGG" id="rso:RSc1711"/>
<dbReference type="eggNOG" id="COG0740">
    <property type="taxonomic scope" value="Bacteria"/>
</dbReference>
<dbReference type="HOGENOM" id="CLU_058707_3_2_4"/>
<dbReference type="Proteomes" id="UP000001436">
    <property type="component" value="Chromosome"/>
</dbReference>
<dbReference type="GO" id="GO:0005737">
    <property type="term" value="C:cytoplasm"/>
    <property type="evidence" value="ECO:0007669"/>
    <property type="project" value="UniProtKB-SubCell"/>
</dbReference>
<dbReference type="GO" id="GO:0009368">
    <property type="term" value="C:endopeptidase Clp complex"/>
    <property type="evidence" value="ECO:0007669"/>
    <property type="project" value="TreeGrafter"/>
</dbReference>
<dbReference type="GO" id="GO:0004176">
    <property type="term" value="F:ATP-dependent peptidase activity"/>
    <property type="evidence" value="ECO:0007669"/>
    <property type="project" value="InterPro"/>
</dbReference>
<dbReference type="GO" id="GO:0051117">
    <property type="term" value="F:ATPase binding"/>
    <property type="evidence" value="ECO:0007669"/>
    <property type="project" value="TreeGrafter"/>
</dbReference>
<dbReference type="GO" id="GO:0004252">
    <property type="term" value="F:serine-type endopeptidase activity"/>
    <property type="evidence" value="ECO:0007669"/>
    <property type="project" value="UniProtKB-UniRule"/>
</dbReference>
<dbReference type="GO" id="GO:0006515">
    <property type="term" value="P:protein quality control for misfolded or incompletely synthesized proteins"/>
    <property type="evidence" value="ECO:0007669"/>
    <property type="project" value="TreeGrafter"/>
</dbReference>
<dbReference type="CDD" id="cd07017">
    <property type="entry name" value="S14_ClpP_2"/>
    <property type="match status" value="1"/>
</dbReference>
<dbReference type="FunFam" id="3.90.226.10:FF:000001">
    <property type="entry name" value="ATP-dependent Clp protease proteolytic subunit"/>
    <property type="match status" value="1"/>
</dbReference>
<dbReference type="Gene3D" id="3.90.226.10">
    <property type="entry name" value="2-enoyl-CoA Hydratase, Chain A, domain 1"/>
    <property type="match status" value="1"/>
</dbReference>
<dbReference type="HAMAP" id="MF_00444">
    <property type="entry name" value="ClpP"/>
    <property type="match status" value="1"/>
</dbReference>
<dbReference type="InterPro" id="IPR001907">
    <property type="entry name" value="ClpP"/>
</dbReference>
<dbReference type="InterPro" id="IPR029045">
    <property type="entry name" value="ClpP/crotonase-like_dom_sf"/>
</dbReference>
<dbReference type="InterPro" id="IPR023562">
    <property type="entry name" value="ClpP/TepA"/>
</dbReference>
<dbReference type="InterPro" id="IPR033135">
    <property type="entry name" value="ClpP_His_AS"/>
</dbReference>
<dbReference type="InterPro" id="IPR018215">
    <property type="entry name" value="ClpP_Ser_AS"/>
</dbReference>
<dbReference type="NCBIfam" id="TIGR00493">
    <property type="entry name" value="clpP"/>
    <property type="match status" value="1"/>
</dbReference>
<dbReference type="NCBIfam" id="NF001368">
    <property type="entry name" value="PRK00277.1"/>
    <property type="match status" value="1"/>
</dbReference>
<dbReference type="NCBIfam" id="NF009205">
    <property type="entry name" value="PRK12553.1"/>
    <property type="match status" value="1"/>
</dbReference>
<dbReference type="PANTHER" id="PTHR10381">
    <property type="entry name" value="ATP-DEPENDENT CLP PROTEASE PROTEOLYTIC SUBUNIT"/>
    <property type="match status" value="1"/>
</dbReference>
<dbReference type="PANTHER" id="PTHR10381:SF70">
    <property type="entry name" value="ATP-DEPENDENT CLP PROTEASE PROTEOLYTIC SUBUNIT"/>
    <property type="match status" value="1"/>
</dbReference>
<dbReference type="Pfam" id="PF00574">
    <property type="entry name" value="CLP_protease"/>
    <property type="match status" value="1"/>
</dbReference>
<dbReference type="PRINTS" id="PR00127">
    <property type="entry name" value="CLPPROTEASEP"/>
</dbReference>
<dbReference type="SUPFAM" id="SSF52096">
    <property type="entry name" value="ClpP/crotonase"/>
    <property type="match status" value="1"/>
</dbReference>
<dbReference type="PROSITE" id="PS00382">
    <property type="entry name" value="CLP_PROTEASE_HIS"/>
    <property type="match status" value="1"/>
</dbReference>
<dbReference type="PROSITE" id="PS00381">
    <property type="entry name" value="CLP_PROTEASE_SER"/>
    <property type="match status" value="1"/>
</dbReference>
<gene>
    <name evidence="1" type="primary">clpP</name>
    <name type="ordered locus">RSc1711</name>
    <name type="ORF">RS02901</name>
</gene>
<name>CLPP_RALN1</name>
<organism>
    <name type="scientific">Ralstonia nicotianae (strain ATCC BAA-1114 / GMI1000)</name>
    <name type="common">Ralstonia solanacearum</name>
    <dbReference type="NCBI Taxonomy" id="267608"/>
    <lineage>
        <taxon>Bacteria</taxon>
        <taxon>Pseudomonadati</taxon>
        <taxon>Pseudomonadota</taxon>
        <taxon>Betaproteobacteria</taxon>
        <taxon>Burkholderiales</taxon>
        <taxon>Burkholderiaceae</taxon>
        <taxon>Ralstonia</taxon>
        <taxon>Ralstonia solanacearum species complex</taxon>
    </lineage>
</organism>
<feature type="chain" id="PRO_0000179630" description="ATP-dependent Clp protease proteolytic subunit">
    <location>
        <begin position="1"/>
        <end position="217"/>
    </location>
</feature>
<feature type="active site" description="Nucleophile" evidence="1">
    <location>
        <position position="120"/>
    </location>
</feature>
<feature type="active site" evidence="1">
    <location>
        <position position="145"/>
    </location>
</feature>
<protein>
    <recommendedName>
        <fullName evidence="1">ATP-dependent Clp protease proteolytic subunit</fullName>
        <ecNumber evidence="1">3.4.21.92</ecNumber>
    </recommendedName>
    <alternativeName>
        <fullName evidence="1">Endopeptidase Clp</fullName>
    </alternativeName>
</protein>
<keyword id="KW-0963">Cytoplasm</keyword>
<keyword id="KW-0378">Hydrolase</keyword>
<keyword id="KW-0645">Protease</keyword>
<keyword id="KW-1185">Reference proteome</keyword>
<keyword id="KW-0720">Serine protease</keyword>